<proteinExistence type="inferred from homology"/>
<gene>
    <name evidence="1" type="primary">leuB</name>
    <name type="ordered locus">Csal_2451</name>
</gene>
<comment type="function">
    <text evidence="1">Catalyzes the oxidation of 3-carboxy-2-hydroxy-4-methylpentanoate (3-isopropylmalate) to 3-carboxy-4-methyl-2-oxopentanoate. The product decarboxylates to 4-methyl-2 oxopentanoate.</text>
</comment>
<comment type="catalytic activity">
    <reaction evidence="1">
        <text>(2R,3S)-3-isopropylmalate + NAD(+) = 4-methyl-2-oxopentanoate + CO2 + NADH</text>
        <dbReference type="Rhea" id="RHEA:32271"/>
        <dbReference type="ChEBI" id="CHEBI:16526"/>
        <dbReference type="ChEBI" id="CHEBI:17865"/>
        <dbReference type="ChEBI" id="CHEBI:35121"/>
        <dbReference type="ChEBI" id="CHEBI:57540"/>
        <dbReference type="ChEBI" id="CHEBI:57945"/>
        <dbReference type="EC" id="1.1.1.85"/>
    </reaction>
</comment>
<comment type="cofactor">
    <cofactor evidence="1">
        <name>Mg(2+)</name>
        <dbReference type="ChEBI" id="CHEBI:18420"/>
    </cofactor>
    <cofactor evidence="1">
        <name>Mn(2+)</name>
        <dbReference type="ChEBI" id="CHEBI:29035"/>
    </cofactor>
    <text evidence="1">Binds 1 Mg(2+) or Mn(2+) ion per subunit.</text>
</comment>
<comment type="pathway">
    <text evidence="1">Amino-acid biosynthesis; L-leucine biosynthesis; L-leucine from 3-methyl-2-oxobutanoate: step 3/4.</text>
</comment>
<comment type="subunit">
    <text evidence="1">Homodimer.</text>
</comment>
<comment type="subcellular location">
    <subcellularLocation>
        <location evidence="1">Cytoplasm</location>
    </subcellularLocation>
</comment>
<comment type="similarity">
    <text evidence="1">Belongs to the isocitrate and isopropylmalate dehydrogenases family. LeuB type 1 subfamily.</text>
</comment>
<comment type="sequence caution" evidence="2">
    <conflict type="erroneous initiation">
        <sequence resource="EMBL-CDS" id="ABE59798"/>
    </conflict>
</comment>
<protein>
    <recommendedName>
        <fullName evidence="1">3-isopropylmalate dehydrogenase</fullName>
        <ecNumber evidence="1">1.1.1.85</ecNumber>
    </recommendedName>
    <alternativeName>
        <fullName evidence="1">3-IPM-DH</fullName>
    </alternativeName>
    <alternativeName>
        <fullName evidence="1">Beta-IPM dehydrogenase</fullName>
        <shortName evidence="1">IMDH</shortName>
    </alternativeName>
</protein>
<name>LEU3_CHRSD</name>
<reference key="1">
    <citation type="journal article" date="2011" name="Stand. Genomic Sci.">
        <title>Complete genome sequence of the halophilic and highly halotolerant Chromohalobacter salexigens type strain (1H11(T)).</title>
        <authorList>
            <person name="Copeland A."/>
            <person name="O'Connor K."/>
            <person name="Lucas S."/>
            <person name="Lapidus A."/>
            <person name="Berry K.W."/>
            <person name="Detter J.C."/>
            <person name="Del Rio T.G."/>
            <person name="Hammon N."/>
            <person name="Dalin E."/>
            <person name="Tice H."/>
            <person name="Pitluck S."/>
            <person name="Bruce D."/>
            <person name="Goodwin L."/>
            <person name="Han C."/>
            <person name="Tapia R."/>
            <person name="Saunders E."/>
            <person name="Schmutz J."/>
            <person name="Brettin T."/>
            <person name="Larimer F."/>
            <person name="Land M."/>
            <person name="Hauser L."/>
            <person name="Vargas C."/>
            <person name="Nieto J.J."/>
            <person name="Kyrpides N.C."/>
            <person name="Ivanova N."/>
            <person name="Goker M."/>
            <person name="Klenk H.P."/>
            <person name="Csonka L.N."/>
            <person name="Woyke T."/>
        </authorList>
    </citation>
    <scope>NUCLEOTIDE SEQUENCE [LARGE SCALE GENOMIC DNA]</scope>
    <source>
        <strain>ATCC BAA-138 / DSM 3043 / CIP 106854 / NCIMB 13768 / 1H11</strain>
    </source>
</reference>
<feature type="chain" id="PRO_0000250112" description="3-isopropylmalate dehydrogenase">
    <location>
        <begin position="1"/>
        <end position="359"/>
    </location>
</feature>
<feature type="binding site" evidence="1">
    <location>
        <position position="96"/>
    </location>
    <ligand>
        <name>substrate</name>
    </ligand>
</feature>
<feature type="binding site" evidence="1">
    <location>
        <position position="106"/>
    </location>
    <ligand>
        <name>substrate</name>
    </ligand>
</feature>
<feature type="binding site" evidence="1">
    <location>
        <position position="134"/>
    </location>
    <ligand>
        <name>substrate</name>
    </ligand>
</feature>
<feature type="binding site" evidence="1">
    <location>
        <position position="223"/>
    </location>
    <ligand>
        <name>Mg(2+)</name>
        <dbReference type="ChEBI" id="CHEBI:18420"/>
    </ligand>
</feature>
<feature type="binding site" evidence="1">
    <location>
        <position position="223"/>
    </location>
    <ligand>
        <name>substrate</name>
    </ligand>
</feature>
<feature type="binding site" evidence="1">
    <location>
        <position position="247"/>
    </location>
    <ligand>
        <name>Mg(2+)</name>
        <dbReference type="ChEBI" id="CHEBI:18420"/>
    </ligand>
</feature>
<feature type="binding site" evidence="1">
    <location>
        <position position="251"/>
    </location>
    <ligand>
        <name>Mg(2+)</name>
        <dbReference type="ChEBI" id="CHEBI:18420"/>
    </ligand>
</feature>
<feature type="binding site" evidence="1">
    <location>
        <begin position="281"/>
        <end position="293"/>
    </location>
    <ligand>
        <name>NAD(+)</name>
        <dbReference type="ChEBI" id="CHEBI:57540"/>
    </ligand>
</feature>
<feature type="site" description="Important for catalysis" evidence="1">
    <location>
        <position position="141"/>
    </location>
</feature>
<feature type="site" description="Important for catalysis" evidence="1">
    <location>
        <position position="191"/>
    </location>
</feature>
<accession>Q1QUR0</accession>
<keyword id="KW-0028">Amino-acid biosynthesis</keyword>
<keyword id="KW-0100">Branched-chain amino acid biosynthesis</keyword>
<keyword id="KW-0963">Cytoplasm</keyword>
<keyword id="KW-0432">Leucine biosynthesis</keyword>
<keyword id="KW-0460">Magnesium</keyword>
<keyword id="KW-0464">Manganese</keyword>
<keyword id="KW-0479">Metal-binding</keyword>
<keyword id="KW-0520">NAD</keyword>
<keyword id="KW-0560">Oxidoreductase</keyword>
<keyword id="KW-1185">Reference proteome</keyword>
<dbReference type="EC" id="1.1.1.85" evidence="1"/>
<dbReference type="EMBL" id="CP000285">
    <property type="protein sequence ID" value="ABE59798.1"/>
    <property type="status" value="ALT_INIT"/>
    <property type="molecule type" value="Genomic_DNA"/>
</dbReference>
<dbReference type="RefSeq" id="WP_043558529.1">
    <property type="nucleotide sequence ID" value="NC_007963.1"/>
</dbReference>
<dbReference type="SMR" id="Q1QUR0"/>
<dbReference type="STRING" id="290398.Csal_2451"/>
<dbReference type="GeneID" id="95335157"/>
<dbReference type="KEGG" id="csa:Csal_2451"/>
<dbReference type="eggNOG" id="COG0473">
    <property type="taxonomic scope" value="Bacteria"/>
</dbReference>
<dbReference type="HOGENOM" id="CLU_031953_0_3_6"/>
<dbReference type="OrthoDB" id="9806254at2"/>
<dbReference type="UniPathway" id="UPA00048">
    <property type="reaction ID" value="UER00072"/>
</dbReference>
<dbReference type="Proteomes" id="UP000000239">
    <property type="component" value="Chromosome"/>
</dbReference>
<dbReference type="GO" id="GO:0005829">
    <property type="term" value="C:cytosol"/>
    <property type="evidence" value="ECO:0007669"/>
    <property type="project" value="TreeGrafter"/>
</dbReference>
<dbReference type="GO" id="GO:0003862">
    <property type="term" value="F:3-isopropylmalate dehydrogenase activity"/>
    <property type="evidence" value="ECO:0007669"/>
    <property type="project" value="UniProtKB-UniRule"/>
</dbReference>
<dbReference type="GO" id="GO:0000287">
    <property type="term" value="F:magnesium ion binding"/>
    <property type="evidence" value="ECO:0007669"/>
    <property type="project" value="InterPro"/>
</dbReference>
<dbReference type="GO" id="GO:0051287">
    <property type="term" value="F:NAD binding"/>
    <property type="evidence" value="ECO:0007669"/>
    <property type="project" value="InterPro"/>
</dbReference>
<dbReference type="GO" id="GO:0009098">
    <property type="term" value="P:L-leucine biosynthetic process"/>
    <property type="evidence" value="ECO:0007669"/>
    <property type="project" value="UniProtKB-UniRule"/>
</dbReference>
<dbReference type="FunFam" id="3.40.718.10:FF:000028">
    <property type="entry name" value="3-isopropylmalate dehydrogenase"/>
    <property type="match status" value="1"/>
</dbReference>
<dbReference type="Gene3D" id="3.40.718.10">
    <property type="entry name" value="Isopropylmalate Dehydrogenase"/>
    <property type="match status" value="1"/>
</dbReference>
<dbReference type="HAMAP" id="MF_01033">
    <property type="entry name" value="LeuB_type1"/>
    <property type="match status" value="1"/>
</dbReference>
<dbReference type="InterPro" id="IPR019818">
    <property type="entry name" value="IsoCit/isopropylmalate_DH_CS"/>
</dbReference>
<dbReference type="InterPro" id="IPR024084">
    <property type="entry name" value="IsoPropMal-DH-like_dom"/>
</dbReference>
<dbReference type="InterPro" id="IPR004429">
    <property type="entry name" value="Isopropylmalate_DH"/>
</dbReference>
<dbReference type="NCBIfam" id="TIGR00169">
    <property type="entry name" value="leuB"/>
    <property type="match status" value="1"/>
</dbReference>
<dbReference type="PANTHER" id="PTHR42979">
    <property type="entry name" value="3-ISOPROPYLMALATE DEHYDROGENASE"/>
    <property type="match status" value="1"/>
</dbReference>
<dbReference type="PANTHER" id="PTHR42979:SF1">
    <property type="entry name" value="3-ISOPROPYLMALATE DEHYDROGENASE"/>
    <property type="match status" value="1"/>
</dbReference>
<dbReference type="Pfam" id="PF00180">
    <property type="entry name" value="Iso_dh"/>
    <property type="match status" value="1"/>
</dbReference>
<dbReference type="SMART" id="SM01329">
    <property type="entry name" value="Iso_dh"/>
    <property type="match status" value="1"/>
</dbReference>
<dbReference type="SUPFAM" id="SSF53659">
    <property type="entry name" value="Isocitrate/Isopropylmalate dehydrogenase-like"/>
    <property type="match status" value="1"/>
</dbReference>
<dbReference type="PROSITE" id="PS00470">
    <property type="entry name" value="IDH_IMDH"/>
    <property type="match status" value="1"/>
</dbReference>
<sequence length="359" mass="38363">MSRKILVLPGDGIGPEITREAVKILNACREAGLEASIEEGLVGGAGIDAHGVPLPDETLASAKAADAVLLGAVGGPQWDKIEDLSKRPEKGLLGLRKNLNLFGNLRPALLYPQLASASSLKPEIVAGLDIMIVRELTGGIYFGQPRGIEERDGERVGYNTYIYAEHEIERIGRVAFEMARERGGKLCSVDKANVLEATILWREVMERLAPEYPDVALSHMYVDNAAMQLVRAPKQFDVIVTGNMFGDILSDAAAMLTGSIGMLPSASLNEQRQGMYEPCHGSAPDIAGQGIANPLATILSVAMMLRYSLEAPQLAERIERAVGTVLDQGLRTADIAFEGTAPVSTQAMGDAVLAAFQAQ</sequence>
<organism>
    <name type="scientific">Chromohalobacter salexigens (strain ATCC BAA-138 / DSM 3043 / CIP 106854 / NCIMB 13768 / 1H11)</name>
    <dbReference type="NCBI Taxonomy" id="290398"/>
    <lineage>
        <taxon>Bacteria</taxon>
        <taxon>Pseudomonadati</taxon>
        <taxon>Pseudomonadota</taxon>
        <taxon>Gammaproteobacteria</taxon>
        <taxon>Oceanospirillales</taxon>
        <taxon>Halomonadaceae</taxon>
        <taxon>Chromohalobacter</taxon>
    </lineage>
</organism>
<evidence type="ECO:0000255" key="1">
    <source>
        <dbReference type="HAMAP-Rule" id="MF_01033"/>
    </source>
</evidence>
<evidence type="ECO:0000305" key="2"/>